<evidence type="ECO:0000250" key="1"/>
<evidence type="ECO:0000255" key="2"/>
<evidence type="ECO:0000255" key="3">
    <source>
        <dbReference type="PROSITE-ProRule" id="PRU00096"/>
    </source>
</evidence>
<evidence type="ECO:0000305" key="4"/>
<accession>Q0VCA9</accession>
<reference key="1">
    <citation type="submission" date="2006-08" db="EMBL/GenBank/DDBJ databases">
        <authorList>
            <consortium name="NIH - Mammalian Gene Collection (MGC) project"/>
        </authorList>
    </citation>
    <scope>NUCLEOTIDE SEQUENCE [LARGE SCALE MRNA]</scope>
    <source>
        <strain>Hereford</strain>
        <tissue>Fetal liver</tissue>
    </source>
</reference>
<proteinExistence type="evidence at transcript level"/>
<gene>
    <name type="primary">TMED6</name>
</gene>
<dbReference type="EMBL" id="BC120264">
    <property type="protein sequence ID" value="AAI20265.1"/>
    <property type="molecule type" value="mRNA"/>
</dbReference>
<dbReference type="RefSeq" id="NP_001069456.1">
    <property type="nucleotide sequence ID" value="NM_001075988.2"/>
</dbReference>
<dbReference type="SMR" id="Q0VCA9"/>
<dbReference type="FunCoup" id="Q0VCA9">
    <property type="interactions" value="32"/>
</dbReference>
<dbReference type="STRING" id="9913.ENSBTAP00000010015"/>
<dbReference type="GlyCosmos" id="Q0VCA9">
    <property type="glycosylation" value="2 sites, No reported glycans"/>
</dbReference>
<dbReference type="GlyGen" id="Q0VCA9">
    <property type="glycosylation" value="2 sites"/>
</dbReference>
<dbReference type="PaxDb" id="9913-ENSBTAP00000010015"/>
<dbReference type="Ensembl" id="ENSBTAT00000010015.5">
    <property type="protein sequence ID" value="ENSBTAP00000010015.4"/>
    <property type="gene ID" value="ENSBTAG00000007616.5"/>
</dbReference>
<dbReference type="GeneID" id="533277"/>
<dbReference type="KEGG" id="bta:533277"/>
<dbReference type="CTD" id="146456"/>
<dbReference type="VEuPathDB" id="HostDB:ENSBTAG00000007616"/>
<dbReference type="VGNC" id="VGNC:110069">
    <property type="gene designation" value="TMED6"/>
</dbReference>
<dbReference type="eggNOG" id="KOG3287">
    <property type="taxonomic scope" value="Eukaryota"/>
</dbReference>
<dbReference type="GeneTree" id="ENSGT00390000010961"/>
<dbReference type="HOGENOM" id="CLU_066963_5_1_1"/>
<dbReference type="InParanoid" id="Q0VCA9"/>
<dbReference type="OMA" id="HNRFSTM"/>
<dbReference type="OrthoDB" id="10037706at2759"/>
<dbReference type="TreeFam" id="TF313000"/>
<dbReference type="Proteomes" id="UP000009136">
    <property type="component" value="Chromosome 18"/>
</dbReference>
<dbReference type="Bgee" id="ENSBTAG00000007616">
    <property type="expression patterns" value="Expressed in caput epididymis and 103 other cell types or tissues"/>
</dbReference>
<dbReference type="GO" id="GO:0030134">
    <property type="term" value="C:COPII-coated ER to Golgi transport vesicle"/>
    <property type="evidence" value="ECO:0000318"/>
    <property type="project" value="GO_Central"/>
</dbReference>
<dbReference type="GO" id="GO:0005783">
    <property type="term" value="C:endoplasmic reticulum"/>
    <property type="evidence" value="ECO:0000318"/>
    <property type="project" value="GO_Central"/>
</dbReference>
<dbReference type="GO" id="GO:0005789">
    <property type="term" value="C:endoplasmic reticulum membrane"/>
    <property type="evidence" value="ECO:0007669"/>
    <property type="project" value="UniProtKB-SubCell"/>
</dbReference>
<dbReference type="GO" id="GO:0005793">
    <property type="term" value="C:endoplasmic reticulum-Golgi intermediate compartment"/>
    <property type="evidence" value="ECO:0000318"/>
    <property type="project" value="GO_Central"/>
</dbReference>
<dbReference type="GO" id="GO:0005794">
    <property type="term" value="C:Golgi apparatus"/>
    <property type="evidence" value="ECO:0000318"/>
    <property type="project" value="GO_Central"/>
</dbReference>
<dbReference type="GO" id="GO:0006888">
    <property type="term" value="P:endoplasmic reticulum to Golgi vesicle-mediated transport"/>
    <property type="evidence" value="ECO:0000318"/>
    <property type="project" value="GO_Central"/>
</dbReference>
<dbReference type="GO" id="GO:0007030">
    <property type="term" value="P:Golgi organization"/>
    <property type="evidence" value="ECO:0000318"/>
    <property type="project" value="GO_Central"/>
</dbReference>
<dbReference type="GO" id="GO:0006886">
    <property type="term" value="P:intracellular protein transport"/>
    <property type="evidence" value="ECO:0000318"/>
    <property type="project" value="GO_Central"/>
</dbReference>
<dbReference type="InterPro" id="IPR015720">
    <property type="entry name" value="Emp24-like"/>
</dbReference>
<dbReference type="InterPro" id="IPR009038">
    <property type="entry name" value="GOLD_dom"/>
</dbReference>
<dbReference type="PANTHER" id="PTHR22811">
    <property type="entry name" value="TRANSMEMBRANE EMP24 DOMAIN-CONTAINING PROTEIN"/>
    <property type="match status" value="1"/>
</dbReference>
<dbReference type="Pfam" id="PF01105">
    <property type="entry name" value="EMP24_GP25L"/>
    <property type="match status" value="1"/>
</dbReference>
<dbReference type="SMART" id="SM01190">
    <property type="entry name" value="EMP24_GP25L"/>
    <property type="match status" value="1"/>
</dbReference>
<dbReference type="PROSITE" id="PS50866">
    <property type="entry name" value="GOLD"/>
    <property type="match status" value="1"/>
</dbReference>
<name>TMED6_BOVIN</name>
<protein>
    <recommendedName>
        <fullName>Transmembrane emp24 domain-containing protein 6</fullName>
    </recommendedName>
    <alternativeName>
        <fullName>p24 family protein gamma-5</fullName>
        <shortName>p24gamma5</shortName>
    </alternativeName>
</protein>
<organism>
    <name type="scientific">Bos taurus</name>
    <name type="common">Bovine</name>
    <dbReference type="NCBI Taxonomy" id="9913"/>
    <lineage>
        <taxon>Eukaryota</taxon>
        <taxon>Metazoa</taxon>
        <taxon>Chordata</taxon>
        <taxon>Craniata</taxon>
        <taxon>Vertebrata</taxon>
        <taxon>Euteleostomi</taxon>
        <taxon>Mammalia</taxon>
        <taxon>Eutheria</taxon>
        <taxon>Laurasiatheria</taxon>
        <taxon>Artiodactyla</taxon>
        <taxon>Ruminantia</taxon>
        <taxon>Pecora</taxon>
        <taxon>Bovidae</taxon>
        <taxon>Bovinae</taxon>
        <taxon>Bos</taxon>
    </lineage>
</organism>
<keyword id="KW-0256">Endoplasmic reticulum</keyword>
<keyword id="KW-0325">Glycoprotein</keyword>
<keyword id="KW-0472">Membrane</keyword>
<keyword id="KW-1185">Reference proteome</keyword>
<keyword id="KW-0732">Signal</keyword>
<keyword id="KW-0812">Transmembrane</keyword>
<keyword id="KW-1133">Transmembrane helix</keyword>
<sequence>MFPLLFVAGLVVLNLVSSARSQKTEPLSGTGDQSLFRGADQHDFAIVIPPGGTECFWQFAHQTGYFYFSYEVQRTIGMSHDRHVAATAHTPQGFLIETSKNVRGQINFSTHETGFYQLCLANQQNRFASVQVYLNFGVFYEGPEMDHKENERKQLNDTLDAIEESTRKVHYNIFHMWRHYNFARMRKTADFFLLQSNYNYVNWWSTAQSLVIVLSGILQLYFLKRLFNTPMTTETQKPRC</sequence>
<feature type="signal peptide" evidence="2">
    <location>
        <begin position="1"/>
        <end position="21"/>
    </location>
</feature>
<feature type="chain" id="PRO_0000283034" description="Transmembrane emp24 domain-containing protein 6">
    <location>
        <begin position="22"/>
        <end position="240"/>
    </location>
</feature>
<feature type="topological domain" description="Lumenal" evidence="2">
    <location>
        <begin position="22"/>
        <end position="200"/>
    </location>
</feature>
<feature type="transmembrane region" description="Helical" evidence="2">
    <location>
        <begin position="201"/>
        <end position="223"/>
    </location>
</feature>
<feature type="topological domain" description="Cytoplasmic" evidence="2">
    <location>
        <begin position="224"/>
        <end position="240"/>
    </location>
</feature>
<feature type="domain" description="GOLD" evidence="3">
    <location>
        <begin position="53"/>
        <end position="138"/>
    </location>
</feature>
<feature type="glycosylation site" description="N-linked (GlcNAc...) asparagine" evidence="2">
    <location>
        <position position="107"/>
    </location>
</feature>
<feature type="glycosylation site" description="N-linked (GlcNAc...) asparagine" evidence="2">
    <location>
        <position position="156"/>
    </location>
</feature>
<comment type="subcellular location">
    <subcellularLocation>
        <location evidence="1">Endoplasmic reticulum membrane</location>
        <topology evidence="1">Single-pass type I membrane protein</topology>
    </subcellularLocation>
</comment>
<comment type="similarity">
    <text evidence="4">Belongs to the EMP24/GP25L family.</text>
</comment>